<dbReference type="EC" id="1.14.13.168"/>
<dbReference type="EMBL" id="AC006601">
    <property type="status" value="NOT_ANNOTATED_CDS"/>
    <property type="molecule type" value="Genomic_DNA"/>
</dbReference>
<dbReference type="EMBL" id="CP002688">
    <property type="protein sequence ID" value="AED93473.1"/>
    <property type="molecule type" value="Genomic_DNA"/>
</dbReference>
<dbReference type="EMBL" id="AY065229">
    <property type="protein sequence ID" value="AAL38705.1"/>
    <property type="molecule type" value="mRNA"/>
</dbReference>
<dbReference type="EMBL" id="AY113851">
    <property type="protein sequence ID" value="AAM44899.1"/>
    <property type="molecule type" value="mRNA"/>
</dbReference>
<dbReference type="RefSeq" id="NP_197944.2">
    <molecule id="Q8VZ59-1"/>
    <property type="nucleotide sequence ID" value="NM_122473.3"/>
</dbReference>
<dbReference type="SMR" id="Q8VZ59"/>
<dbReference type="FunCoup" id="Q8VZ59">
    <property type="interactions" value="4"/>
</dbReference>
<dbReference type="STRING" id="3702.Q8VZ59"/>
<dbReference type="iPTMnet" id="Q8VZ59"/>
<dbReference type="PaxDb" id="3702-AT5G25620.2"/>
<dbReference type="EnsemblPlants" id="AT5G25620.1">
    <molecule id="Q8VZ59-1"/>
    <property type="protein sequence ID" value="AT5G25620.1"/>
    <property type="gene ID" value="AT5G25620"/>
</dbReference>
<dbReference type="GeneID" id="832638"/>
<dbReference type="Gramene" id="AT5G25620.1">
    <molecule id="Q8VZ59-1"/>
    <property type="protein sequence ID" value="AT5G25620.1"/>
    <property type="gene ID" value="AT5G25620"/>
</dbReference>
<dbReference type="KEGG" id="ath:AT5G25620"/>
<dbReference type="Araport" id="AT5G25620"/>
<dbReference type="TAIR" id="AT5G25620">
    <property type="gene designation" value="YUC6"/>
</dbReference>
<dbReference type="eggNOG" id="KOG1399">
    <property type="taxonomic scope" value="Eukaryota"/>
</dbReference>
<dbReference type="InParanoid" id="Q8VZ59"/>
<dbReference type="OMA" id="DIEWCWK"/>
<dbReference type="PhylomeDB" id="Q8VZ59"/>
<dbReference type="BRENDA" id="1.14.13.168">
    <property type="organism ID" value="399"/>
</dbReference>
<dbReference type="UniPathway" id="UPA00151"/>
<dbReference type="PRO" id="PR:Q8VZ59"/>
<dbReference type="Proteomes" id="UP000006548">
    <property type="component" value="Chromosome 5"/>
</dbReference>
<dbReference type="ExpressionAtlas" id="Q8VZ59">
    <property type="expression patterns" value="baseline and differential"/>
</dbReference>
<dbReference type="GO" id="GO:0005737">
    <property type="term" value="C:cytoplasm"/>
    <property type="evidence" value="ECO:0007669"/>
    <property type="project" value="UniProtKB-SubCell"/>
</dbReference>
<dbReference type="GO" id="GO:0050660">
    <property type="term" value="F:flavin adenine dinucleotide binding"/>
    <property type="evidence" value="ECO:0007669"/>
    <property type="project" value="InterPro"/>
</dbReference>
<dbReference type="GO" id="GO:0103075">
    <property type="term" value="F:indole-3-pyruvate monooxygenase activity"/>
    <property type="evidence" value="ECO:0007669"/>
    <property type="project" value="UniProtKB-EC"/>
</dbReference>
<dbReference type="GO" id="GO:0004499">
    <property type="term" value="F:N,N-dimethylaniline monooxygenase activity"/>
    <property type="evidence" value="ECO:0007669"/>
    <property type="project" value="InterPro"/>
</dbReference>
<dbReference type="GO" id="GO:0050661">
    <property type="term" value="F:NADP binding"/>
    <property type="evidence" value="ECO:0007669"/>
    <property type="project" value="InterPro"/>
</dbReference>
<dbReference type="GO" id="GO:0009851">
    <property type="term" value="P:auxin biosynthetic process"/>
    <property type="evidence" value="ECO:0007669"/>
    <property type="project" value="UniProtKB-UniPathway"/>
</dbReference>
<dbReference type="FunFam" id="3.50.50.60:FF:000100">
    <property type="entry name" value="Flavin-containing monooxygenase"/>
    <property type="match status" value="1"/>
</dbReference>
<dbReference type="Gene3D" id="3.50.50.60">
    <property type="entry name" value="FAD/NAD(P)-binding domain"/>
    <property type="match status" value="1"/>
</dbReference>
<dbReference type="InterPro" id="IPR050982">
    <property type="entry name" value="Auxin_biosynth/cation_transpt"/>
</dbReference>
<dbReference type="InterPro" id="IPR036188">
    <property type="entry name" value="FAD/NAD-bd_sf"/>
</dbReference>
<dbReference type="InterPro" id="IPR020946">
    <property type="entry name" value="Flavin_mOase-like"/>
</dbReference>
<dbReference type="InterPro" id="IPR036291">
    <property type="entry name" value="NAD(P)-bd_dom_sf"/>
</dbReference>
<dbReference type="PANTHER" id="PTHR43539">
    <property type="entry name" value="FLAVIN-BINDING MONOOXYGENASE-LIKE PROTEIN (AFU_ORTHOLOGUE AFUA_4G09220)"/>
    <property type="match status" value="1"/>
</dbReference>
<dbReference type="PANTHER" id="PTHR43539:SF38">
    <property type="entry name" value="INDOLE-3-PYRUVATE MONOOXYGENASE YUCCA6"/>
    <property type="match status" value="1"/>
</dbReference>
<dbReference type="Pfam" id="PF00743">
    <property type="entry name" value="FMO-like"/>
    <property type="match status" value="1"/>
</dbReference>
<dbReference type="PRINTS" id="PR00368">
    <property type="entry name" value="FADPNR"/>
</dbReference>
<dbReference type="PRINTS" id="PR00469">
    <property type="entry name" value="PNDRDTASEII"/>
</dbReference>
<dbReference type="SUPFAM" id="SSF51905">
    <property type="entry name" value="FAD/NAD(P)-binding domain"/>
    <property type="match status" value="1"/>
</dbReference>
<dbReference type="SUPFAM" id="SSF51735">
    <property type="entry name" value="NAD(P)-binding Rossmann-fold domains"/>
    <property type="match status" value="1"/>
</dbReference>
<reference key="1">
    <citation type="journal article" date="2000" name="Nature">
        <title>Sequence and analysis of chromosome 5 of the plant Arabidopsis thaliana.</title>
        <authorList>
            <person name="Tabata S."/>
            <person name="Kaneko T."/>
            <person name="Nakamura Y."/>
            <person name="Kotani H."/>
            <person name="Kato T."/>
            <person name="Asamizu E."/>
            <person name="Miyajima N."/>
            <person name="Sasamoto S."/>
            <person name="Kimura T."/>
            <person name="Hosouchi T."/>
            <person name="Kawashima K."/>
            <person name="Kohara M."/>
            <person name="Matsumoto M."/>
            <person name="Matsuno A."/>
            <person name="Muraki A."/>
            <person name="Nakayama S."/>
            <person name="Nakazaki N."/>
            <person name="Naruo K."/>
            <person name="Okumura S."/>
            <person name="Shinpo S."/>
            <person name="Takeuchi C."/>
            <person name="Wada T."/>
            <person name="Watanabe A."/>
            <person name="Yamada M."/>
            <person name="Yasuda M."/>
            <person name="Sato S."/>
            <person name="de la Bastide M."/>
            <person name="Huang E."/>
            <person name="Spiegel L."/>
            <person name="Gnoj L."/>
            <person name="O'Shaughnessy A."/>
            <person name="Preston R."/>
            <person name="Habermann K."/>
            <person name="Murray J."/>
            <person name="Johnson D."/>
            <person name="Rohlfing T."/>
            <person name="Nelson J."/>
            <person name="Stoneking T."/>
            <person name="Pepin K."/>
            <person name="Spieth J."/>
            <person name="Sekhon M."/>
            <person name="Armstrong J."/>
            <person name="Becker M."/>
            <person name="Belter E."/>
            <person name="Cordum H."/>
            <person name="Cordes M."/>
            <person name="Courtney L."/>
            <person name="Courtney W."/>
            <person name="Dante M."/>
            <person name="Du H."/>
            <person name="Edwards J."/>
            <person name="Fryman J."/>
            <person name="Haakensen B."/>
            <person name="Lamar E."/>
            <person name="Latreille P."/>
            <person name="Leonard S."/>
            <person name="Meyer R."/>
            <person name="Mulvaney E."/>
            <person name="Ozersky P."/>
            <person name="Riley A."/>
            <person name="Strowmatt C."/>
            <person name="Wagner-McPherson C."/>
            <person name="Wollam A."/>
            <person name="Yoakum M."/>
            <person name="Bell M."/>
            <person name="Dedhia N."/>
            <person name="Parnell L."/>
            <person name="Shah R."/>
            <person name="Rodriguez M."/>
            <person name="Hoon See L."/>
            <person name="Vil D."/>
            <person name="Baker J."/>
            <person name="Kirchoff K."/>
            <person name="Toth K."/>
            <person name="King L."/>
            <person name="Bahret A."/>
            <person name="Miller B."/>
            <person name="Marra M.A."/>
            <person name="Martienssen R."/>
            <person name="McCombie W.R."/>
            <person name="Wilson R.K."/>
            <person name="Murphy G."/>
            <person name="Bancroft I."/>
            <person name="Volckaert G."/>
            <person name="Wambutt R."/>
            <person name="Duesterhoeft A."/>
            <person name="Stiekema W."/>
            <person name="Pohl T."/>
            <person name="Entian K.-D."/>
            <person name="Terryn N."/>
            <person name="Hartley N."/>
            <person name="Bent E."/>
            <person name="Johnson S."/>
            <person name="Langham S.-A."/>
            <person name="McCullagh B."/>
            <person name="Robben J."/>
            <person name="Grymonprez B."/>
            <person name="Zimmermann W."/>
            <person name="Ramsperger U."/>
            <person name="Wedler H."/>
            <person name="Balke K."/>
            <person name="Wedler E."/>
            <person name="Peters S."/>
            <person name="van Staveren M."/>
            <person name="Dirkse W."/>
            <person name="Mooijman P."/>
            <person name="Klein Lankhorst R."/>
            <person name="Weitzenegger T."/>
            <person name="Bothe G."/>
            <person name="Rose M."/>
            <person name="Hauf J."/>
            <person name="Berneiser S."/>
            <person name="Hempel S."/>
            <person name="Feldpausch M."/>
            <person name="Lamberth S."/>
            <person name="Villarroel R."/>
            <person name="Gielen J."/>
            <person name="Ardiles W."/>
            <person name="Bents O."/>
            <person name="Lemcke K."/>
            <person name="Kolesov G."/>
            <person name="Mayer K.F.X."/>
            <person name="Rudd S."/>
            <person name="Schoof H."/>
            <person name="Schueller C."/>
            <person name="Zaccaria P."/>
            <person name="Mewes H.-W."/>
            <person name="Bevan M."/>
            <person name="Fransz P.F."/>
        </authorList>
    </citation>
    <scope>NUCLEOTIDE SEQUENCE [LARGE SCALE GENOMIC DNA]</scope>
    <source>
        <strain>cv. Columbia</strain>
    </source>
</reference>
<reference key="2">
    <citation type="journal article" date="2017" name="Plant J.">
        <title>Araport11: a complete reannotation of the Arabidopsis thaliana reference genome.</title>
        <authorList>
            <person name="Cheng C.Y."/>
            <person name="Krishnakumar V."/>
            <person name="Chan A.P."/>
            <person name="Thibaud-Nissen F."/>
            <person name="Schobel S."/>
            <person name="Town C.D."/>
        </authorList>
    </citation>
    <scope>GENOME REANNOTATION</scope>
    <source>
        <strain>cv. Columbia</strain>
    </source>
</reference>
<reference key="3">
    <citation type="journal article" date="2003" name="Science">
        <title>Empirical analysis of transcriptional activity in the Arabidopsis genome.</title>
        <authorList>
            <person name="Yamada K."/>
            <person name="Lim J."/>
            <person name="Dale J.M."/>
            <person name="Chen H."/>
            <person name="Shinn P."/>
            <person name="Palm C.J."/>
            <person name="Southwick A.M."/>
            <person name="Wu H.C."/>
            <person name="Kim C.J."/>
            <person name="Nguyen M."/>
            <person name="Pham P.K."/>
            <person name="Cheuk R.F."/>
            <person name="Karlin-Newmann G."/>
            <person name="Liu S.X."/>
            <person name="Lam B."/>
            <person name="Sakano H."/>
            <person name="Wu T."/>
            <person name="Yu G."/>
            <person name="Miranda M."/>
            <person name="Quach H.L."/>
            <person name="Tripp M."/>
            <person name="Chang C.H."/>
            <person name="Lee J.M."/>
            <person name="Toriumi M.J."/>
            <person name="Chan M.M."/>
            <person name="Tang C.C."/>
            <person name="Onodera C.S."/>
            <person name="Deng J.M."/>
            <person name="Akiyama K."/>
            <person name="Ansari Y."/>
            <person name="Arakawa T."/>
            <person name="Banh J."/>
            <person name="Banno F."/>
            <person name="Bowser L."/>
            <person name="Brooks S.Y."/>
            <person name="Carninci P."/>
            <person name="Chao Q."/>
            <person name="Choy N."/>
            <person name="Enju A."/>
            <person name="Goldsmith A.D."/>
            <person name="Gurjal M."/>
            <person name="Hansen N.F."/>
            <person name="Hayashizaki Y."/>
            <person name="Johnson-Hopson C."/>
            <person name="Hsuan V.W."/>
            <person name="Iida K."/>
            <person name="Karnes M."/>
            <person name="Khan S."/>
            <person name="Koesema E."/>
            <person name="Ishida J."/>
            <person name="Jiang P.X."/>
            <person name="Jones T."/>
            <person name="Kawai J."/>
            <person name="Kamiya A."/>
            <person name="Meyers C."/>
            <person name="Nakajima M."/>
            <person name="Narusaka M."/>
            <person name="Seki M."/>
            <person name="Sakurai T."/>
            <person name="Satou M."/>
            <person name="Tamse R."/>
            <person name="Vaysberg M."/>
            <person name="Wallender E.K."/>
            <person name="Wong C."/>
            <person name="Yamamura Y."/>
            <person name="Yuan S."/>
            <person name="Shinozaki K."/>
            <person name="Davis R.W."/>
            <person name="Theologis A."/>
            <person name="Ecker J.R."/>
        </authorList>
    </citation>
    <scope>NUCLEOTIDE SEQUENCE [LARGE SCALE MRNA]</scope>
    <source>
        <strain>cv. Columbia</strain>
    </source>
</reference>
<reference key="4">
    <citation type="journal article" date="2006" name="Genes Dev.">
        <title>Auxin biosynthesis by the YUCCA flavin monooxygenases controls the formation of floral organs and vascular tissues in Arabidopsis.</title>
        <authorList>
            <person name="Cheng Y."/>
            <person name="Dai X."/>
            <person name="Zhao Y."/>
        </authorList>
    </citation>
    <scope>FUNCTION</scope>
    <scope>GENE FAMILY</scope>
    <scope>NOMENCLATURE</scope>
    <scope>DISRUPTION PHENOTYPE</scope>
</reference>
<reference key="5">
    <citation type="journal article" date="2007" name="Plant J.">
        <title>Identification of a flavin-monooxygenase as the S-oxygenating enzyme in aliphatic glucosinolate biosynthesis in Arabidopsis.</title>
        <authorList>
            <person name="Hansen B.G."/>
            <person name="Kliebenstein D.J."/>
            <person name="Halkier B.A."/>
        </authorList>
    </citation>
    <scope>GENE FAMILY</scope>
    <source>
        <strain>cv. Columbia</strain>
    </source>
</reference>
<reference key="6">
    <citation type="journal article" date="2007" name="Plant Physiol.">
        <title>yucca6, a dominant mutation in Arabidopsis, affects auxin accumulation and auxin-related phenotypes.</title>
        <authorList>
            <person name="Kim J.I."/>
            <person name="Sharkhuu A."/>
            <person name="Jin J.B."/>
            <person name="Li P."/>
            <person name="Jeong J.C."/>
            <person name="Baek D."/>
            <person name="Lee S.Y."/>
            <person name="Blakeslee J.J."/>
            <person name="Murphy A.S."/>
            <person name="Bohnert H.J."/>
            <person name="Hasegawa P.M."/>
            <person name="Yun D.J."/>
            <person name="Bressan R.A."/>
        </authorList>
    </citation>
    <scope>FUNCTION</scope>
    <scope>CATALYTIC ACTIVITY</scope>
    <scope>BIOPHYSICOCHEMICAL PROPERTIES</scope>
    <scope>TISSUE SPECIFICITY</scope>
    <scope>SUBCELLULAR LOCATION</scope>
</reference>
<reference key="7">
    <citation type="journal article" date="2008" name="New Phytol.">
        <title>SPOROCYTELESS modulates YUCCA expression to regulate the development of lateral organs in Arabidopsis.</title>
        <authorList>
            <person name="Li L.C."/>
            <person name="Qin G.J."/>
            <person name="Tsuge T."/>
            <person name="Hou X.H."/>
            <person name="Ding M.Y."/>
            <person name="Aoyama T."/>
            <person name="Oka A."/>
            <person name="Chen Z."/>
            <person name="Gu H."/>
            <person name="Zhao Y."/>
            <person name="Qu L.J."/>
        </authorList>
    </citation>
    <scope>INDUCTION BY SPL</scope>
</reference>
<reference key="8">
    <citation type="journal article" date="2008" name="Plant Cell">
        <title>Auxin regulates Arabidopsis anther dehiscence, pollen maturation, and filament elongation.</title>
        <authorList>
            <person name="Cecchetti V."/>
            <person name="Altamura M.M."/>
            <person name="Falasca G."/>
            <person name="Costantino P."/>
            <person name="Cardarelli M."/>
        </authorList>
    </citation>
    <scope>TISSUE SPECIFICITY</scope>
</reference>
<reference key="9">
    <citation type="journal article" date="2010" name="Proc. Natl. Acad. Sci. U.S.A.">
        <title>Auxins reverse plant male sterility caused by high temperatures.</title>
        <authorList>
            <person name="Sakata T."/>
            <person name="Oshino T."/>
            <person name="Miura S."/>
            <person name="Tomabechi M."/>
            <person name="Tsunaga Y."/>
            <person name="Higashitani N."/>
            <person name="Miyazawa Y."/>
            <person name="Takahashi H."/>
            <person name="Watanabe M."/>
            <person name="Higashitani A."/>
        </authorList>
    </citation>
    <scope>INDUCTION BY HEAT</scope>
</reference>
<reference key="10">
    <citation type="journal article" date="2011" name="Proc. Natl. Acad. Sci. U.S.A.">
        <title>Conversion of tryptophan to indole-3-acetic acid by TRYPTOPHAN AMINOTRANSFERASES OF ARABIDOPSIS and YUCCAs in Arabidopsis.</title>
        <authorList>
            <person name="Won C."/>
            <person name="Shen X."/>
            <person name="Mashiguchi K."/>
            <person name="Zheng Z."/>
            <person name="Dai X."/>
            <person name="Cheng Y."/>
            <person name="Kasahara H."/>
            <person name="Kamiya Y."/>
            <person name="Chory J."/>
            <person name="Zhao Y."/>
        </authorList>
    </citation>
    <scope>FUNCTION</scope>
</reference>
<reference key="11">
    <citation type="journal article" date="2013" name="Mol. Plant">
        <title>Overexpression of Arabidopsis YUCCA6 in potato results in high-auxin developmental phenotypes and enhanced resistance to water deficit.</title>
        <authorList>
            <person name="Kim J.I."/>
            <person name="Baek D."/>
            <person name="Park H.C."/>
            <person name="Chun H.J."/>
            <person name="Oh D.H."/>
            <person name="Lee M.K."/>
            <person name="Cha J.Y."/>
            <person name="Kim W.Y."/>
            <person name="Kim M.C."/>
            <person name="Chung W.S."/>
            <person name="Bohnert H.J."/>
            <person name="Lee S.Y."/>
            <person name="Bressan R.A."/>
            <person name="Lee S.W."/>
            <person name="Yun D.J."/>
        </authorList>
    </citation>
    <scope>FUNCTION</scope>
</reference>
<reference key="12">
    <citation type="journal article" date="2013" name="J. Biol. Chem.">
        <title>The biochemical mechanism of auxin biosynthesis by an Arabidopsis YUCCA flavin-containing monooxygenase.</title>
        <authorList>
            <person name="Dai X."/>
            <person name="Mashiguchi K."/>
            <person name="Chen Q."/>
            <person name="Kasahara H."/>
            <person name="Kamiya Y."/>
            <person name="Ojha S."/>
            <person name="Dubois J."/>
            <person name="Ballou D."/>
            <person name="Zhao Y."/>
        </authorList>
    </citation>
    <scope>FUNCTION</scope>
    <scope>CATALYTIC ACTIVITY</scope>
    <scope>COFACTOR</scope>
    <scope>BIOPHYSICOCHEMICAL PROPERTIES</scope>
</reference>
<accession>Q8VZ59</accession>
<sequence>MDFCWKREMEGKLAHDHRGMTSPRRICVVTGPVIVGAGPSGLATAACLKERGITSVLLERSNCIASLWQLKTYDRLHLHLPKQFCELPIIPFPGDFPTYPTKQQFIEYLEDYARRFDIKPEFNQTVESAAFDENLGMWRVTSVGEEGTTEYVCRWLVAATGENAEPVVPRFEGMDKFAAAGVVKHTCHYKTGGDFAGKRVLVVGCGNSGMEVCLDLCNFGAQPSLVVRDAVHVLPREMLGTSTFGLSMFLLKWLPIRLVDRFLLVVSRFILGDTTLLGLNRPRLGPLELKNISGKTPVLDVGTLAKIKTGDIKVCSGIRRLKRHEVEFDNGKTERFDAIILATGYKSNVPSWLKENKMFSKKDGFPIQEFPEGWRGECGLYAVGFTKRGISGASMDAKRIAEDIHKCWKQDEQVKKI</sequence>
<comment type="function">
    <text evidence="2 3 7 8 9">Involved in auxin biosynthesis via the indole-3-pyruvic acid (IPA) pathway. Also able to convert in vitro phenyl pyruvate (PPA) to phenyl acetic acid (PAA). Required for the formation of floral organs and vascular tissues. Belongs to the set of redundant YUCCA genes probably responsible for auxin biosynthesis in shoots.</text>
</comment>
<comment type="catalytic activity">
    <reaction evidence="3 9">
        <text>indole-3-pyruvate + NADPH + O2 + H(+) = (indol-3-yl)acetate + CO2 + NADP(+) + H2O</text>
        <dbReference type="Rhea" id="RHEA:34331"/>
        <dbReference type="ChEBI" id="CHEBI:15377"/>
        <dbReference type="ChEBI" id="CHEBI:15378"/>
        <dbReference type="ChEBI" id="CHEBI:15379"/>
        <dbReference type="ChEBI" id="CHEBI:16526"/>
        <dbReference type="ChEBI" id="CHEBI:17640"/>
        <dbReference type="ChEBI" id="CHEBI:30854"/>
        <dbReference type="ChEBI" id="CHEBI:57783"/>
        <dbReference type="ChEBI" id="CHEBI:58349"/>
        <dbReference type="EC" id="1.14.13.168"/>
    </reaction>
</comment>
<comment type="cofactor">
    <cofactor evidence="9">
        <name>FAD</name>
        <dbReference type="ChEBI" id="CHEBI:57692"/>
    </cofactor>
</comment>
<comment type="biophysicochemical properties">
    <kinetics>
        <KM evidence="3 9">26 uM for NADPH</KM>
        <KM evidence="3 9">43 uM for phenyl pyruvate</KM>
        <KM evidence="3 9">0.274 mM for tryptamine</KM>
        <Vmax evidence="3 9">9.46 umol/min/mg enzyme with tryptamine as substrate</Vmax>
        <text>kcat is 0.31 sec(-1) for NADPH with phenyl pyruvate as substrate.</text>
    </kinetics>
</comment>
<comment type="pathway">
    <text>Plant hormone metabolism; auxin biosynthesis.</text>
</comment>
<comment type="subcellular location">
    <subcellularLocation>
        <location evidence="3">Cytoplasm</location>
    </subcellularLocation>
</comment>
<comment type="alternative products">
    <event type="alternative splicing"/>
    <isoform>
        <id>Q8VZ59-1</id>
        <name>1</name>
        <sequence type="displayed"/>
    </isoform>
    <text>A number of isoforms are produced. According to EST sequences.</text>
</comment>
<comment type="tissue specificity">
    <text evidence="3 5">Highly expressed in roots but modestly expressed in the cauline leaves and flowers. Expressed in anthers.</text>
</comment>
<comment type="induction">
    <text evidence="4 6">Down-regulated by heat stress. Negatively regulated by SPL.</text>
</comment>
<comment type="disruption phenotype">
    <text evidence="2">No visible phenotype, due to the redundancy with the other members of the YUCCA family.</text>
</comment>
<comment type="similarity">
    <text evidence="10">Belongs to the FMO family.</text>
</comment>
<organism>
    <name type="scientific">Arabidopsis thaliana</name>
    <name type="common">Mouse-ear cress</name>
    <dbReference type="NCBI Taxonomy" id="3702"/>
    <lineage>
        <taxon>Eukaryota</taxon>
        <taxon>Viridiplantae</taxon>
        <taxon>Streptophyta</taxon>
        <taxon>Embryophyta</taxon>
        <taxon>Tracheophyta</taxon>
        <taxon>Spermatophyta</taxon>
        <taxon>Magnoliopsida</taxon>
        <taxon>eudicotyledons</taxon>
        <taxon>Gunneridae</taxon>
        <taxon>Pentapetalae</taxon>
        <taxon>rosids</taxon>
        <taxon>malvids</taxon>
        <taxon>Brassicales</taxon>
        <taxon>Brassicaceae</taxon>
        <taxon>Camelineae</taxon>
        <taxon>Arabidopsis</taxon>
    </lineage>
</organism>
<keyword id="KW-0025">Alternative splicing</keyword>
<keyword id="KW-0073">Auxin biosynthesis</keyword>
<keyword id="KW-0963">Cytoplasm</keyword>
<keyword id="KW-0274">FAD</keyword>
<keyword id="KW-0285">Flavoprotein</keyword>
<keyword id="KW-0503">Monooxygenase</keyword>
<keyword id="KW-0521">NADP</keyword>
<keyword id="KW-0560">Oxidoreductase</keyword>
<keyword id="KW-1185">Reference proteome</keyword>
<gene>
    <name type="primary">YUC6</name>
    <name type="synonym">HYT1</name>
    <name type="synonym">YUCCA6</name>
    <name type="ordered locus">At5g25620</name>
    <name type="ORF">T14C9.160</name>
</gene>
<protein>
    <recommendedName>
        <fullName>Indole-3-pyruvate monooxygenase YUCCA6</fullName>
        <ecNumber>1.14.13.168</ecNumber>
    </recommendedName>
    <alternativeName>
        <fullName>Flavin-containing monooxygenase YUCCA6</fullName>
    </alternativeName>
    <alternativeName>
        <fullName>Protein HYPERTALL1</fullName>
    </alternativeName>
</protein>
<evidence type="ECO:0000255" key="1"/>
<evidence type="ECO:0000269" key="2">
    <source>
    </source>
</evidence>
<evidence type="ECO:0000269" key="3">
    <source>
    </source>
</evidence>
<evidence type="ECO:0000269" key="4">
    <source>
    </source>
</evidence>
<evidence type="ECO:0000269" key="5">
    <source>
    </source>
</evidence>
<evidence type="ECO:0000269" key="6">
    <source>
    </source>
</evidence>
<evidence type="ECO:0000269" key="7">
    <source>
    </source>
</evidence>
<evidence type="ECO:0000269" key="8">
    <source>
    </source>
</evidence>
<evidence type="ECO:0000269" key="9">
    <source>
    </source>
</evidence>
<evidence type="ECO:0000305" key="10"/>
<name>YUC6_ARATH</name>
<proteinExistence type="evidence at protein level"/>
<feature type="chain" id="PRO_0000400073" description="Indole-3-pyruvate monooxygenase YUCCA6">
    <location>
        <begin position="1"/>
        <end position="417"/>
    </location>
</feature>
<feature type="binding site" evidence="1">
    <location>
        <begin position="36"/>
        <end position="41"/>
    </location>
    <ligand>
        <name>FAD</name>
        <dbReference type="ChEBI" id="CHEBI:57692"/>
    </ligand>
</feature>
<feature type="binding site" evidence="1">
    <location>
        <begin position="204"/>
        <end position="209"/>
    </location>
    <ligand>
        <name>NADP(+)</name>
        <dbReference type="ChEBI" id="CHEBI:58349"/>
    </ligand>
</feature>